<sequence>MSASGLPFDDFRELIRNLPGPDLGAERAVREREVTLTKPAGSLGRLEEIVAWLATWTGKRTPQVNRPLVAVFAGNHGVTAKNITPFPPSVTAQMVENFAAGGAAINQICIANDLGLKVFDLALEHPTGDITEEAAMDERTCAATMAFGMEAIAGGTDLLCIGEMGIGNTTIAAAIALALFGGTAEDWVGPGTGSTGELMQRKLAAVRQAVALHQPHLQDPLEVLRCLGGREIAAMAGAILAARMEKIPVIVDGFVASAAAAVLYAANPEAIDHCMFGQVSAEPGHRKLLAKMGKEPLLDLGMRLGEGTGAALAANIVKAAALCHSGMATFEQAGVSASK</sequence>
<keyword id="KW-0169">Cobalamin biosynthesis</keyword>
<keyword id="KW-0328">Glycosyltransferase</keyword>
<keyword id="KW-0808">Transferase</keyword>
<name>COBT_BRUMB</name>
<reference key="1">
    <citation type="submission" date="2009-03" db="EMBL/GenBank/DDBJ databases">
        <title>Brucella melitensis ATCC 23457 whole genome shotgun sequencing project.</title>
        <authorList>
            <person name="Setubal J.C."/>
            <person name="Boyle S."/>
            <person name="Crasta O.R."/>
            <person name="Gillespie J.J."/>
            <person name="Kenyon R.W."/>
            <person name="Lu J."/>
            <person name="Mane S."/>
            <person name="Nagrani S."/>
            <person name="Shallom J.M."/>
            <person name="Shallom S."/>
            <person name="Shukla M."/>
            <person name="Snyder E.E."/>
            <person name="Sobral B.W."/>
            <person name="Wattam A.R."/>
            <person name="Will R."/>
            <person name="Williams K."/>
            <person name="Yoo H."/>
            <person name="Munk C."/>
            <person name="Tapia R."/>
            <person name="Han C."/>
            <person name="Detter J.C."/>
            <person name="Bruce D."/>
            <person name="Brettin T.S."/>
        </authorList>
    </citation>
    <scope>NUCLEOTIDE SEQUENCE [LARGE SCALE GENOMIC DNA]</scope>
    <source>
        <strain>ATCC 23457</strain>
    </source>
</reference>
<proteinExistence type="inferred from homology"/>
<accession>C0RIK0</accession>
<protein>
    <recommendedName>
        <fullName evidence="1">Nicotinate-nucleotide--dimethylbenzimidazole phosphoribosyltransferase</fullName>
        <shortName evidence="1">NN:DBI PRT</shortName>
        <ecNumber evidence="1">2.4.2.21</ecNumber>
    </recommendedName>
    <alternativeName>
        <fullName evidence="1">N(1)-alpha-phosphoribosyltransferase</fullName>
    </alternativeName>
</protein>
<feature type="chain" id="PRO_1000125100" description="Nicotinate-nucleotide--dimethylbenzimidazole phosphoribosyltransferase">
    <location>
        <begin position="1"/>
        <end position="339"/>
    </location>
</feature>
<feature type="active site" description="Proton acceptor" evidence="1">
    <location>
        <position position="306"/>
    </location>
</feature>
<dbReference type="EC" id="2.4.2.21" evidence="1"/>
<dbReference type="EMBL" id="CP001488">
    <property type="protein sequence ID" value="ACO00658.1"/>
    <property type="molecule type" value="Genomic_DNA"/>
</dbReference>
<dbReference type="RefSeq" id="WP_004683690.1">
    <property type="nucleotide sequence ID" value="NC_012441.1"/>
</dbReference>
<dbReference type="SMR" id="C0RIK0"/>
<dbReference type="KEGG" id="bmi:BMEA_A0905"/>
<dbReference type="HOGENOM" id="CLU_002982_0_1_5"/>
<dbReference type="UniPathway" id="UPA00061">
    <property type="reaction ID" value="UER00516"/>
</dbReference>
<dbReference type="Proteomes" id="UP000001748">
    <property type="component" value="Chromosome I"/>
</dbReference>
<dbReference type="GO" id="GO:0008939">
    <property type="term" value="F:nicotinate-nucleotide-dimethylbenzimidazole phosphoribosyltransferase activity"/>
    <property type="evidence" value="ECO:0007669"/>
    <property type="project" value="UniProtKB-UniRule"/>
</dbReference>
<dbReference type="GO" id="GO:0009236">
    <property type="term" value="P:cobalamin biosynthetic process"/>
    <property type="evidence" value="ECO:0007669"/>
    <property type="project" value="UniProtKB-KW"/>
</dbReference>
<dbReference type="CDD" id="cd02439">
    <property type="entry name" value="DMB-PRT_CobT"/>
    <property type="match status" value="1"/>
</dbReference>
<dbReference type="Gene3D" id="1.10.1610.10">
    <property type="match status" value="1"/>
</dbReference>
<dbReference type="Gene3D" id="3.40.50.10210">
    <property type="match status" value="1"/>
</dbReference>
<dbReference type="HAMAP" id="MF_00230">
    <property type="entry name" value="CobT"/>
    <property type="match status" value="1"/>
</dbReference>
<dbReference type="InterPro" id="IPR003200">
    <property type="entry name" value="Nict_dMeBzImd_PRibTrfase"/>
</dbReference>
<dbReference type="InterPro" id="IPR017846">
    <property type="entry name" value="Nict_dMeBzImd_PRibTrfase_bact"/>
</dbReference>
<dbReference type="InterPro" id="IPR023195">
    <property type="entry name" value="Nict_dMeBzImd_PRibTrfase_N"/>
</dbReference>
<dbReference type="InterPro" id="IPR036087">
    <property type="entry name" value="Nict_dMeBzImd_PRibTrfase_sf"/>
</dbReference>
<dbReference type="NCBIfam" id="TIGR03160">
    <property type="entry name" value="cobT_DBIPRT"/>
    <property type="match status" value="1"/>
</dbReference>
<dbReference type="NCBIfam" id="NF000996">
    <property type="entry name" value="PRK00105.1"/>
    <property type="match status" value="1"/>
</dbReference>
<dbReference type="PANTHER" id="PTHR43463">
    <property type="entry name" value="NICOTINATE-NUCLEOTIDE--DIMETHYLBENZIMIDAZOLE PHOSPHORIBOSYLTRANSFERASE"/>
    <property type="match status" value="1"/>
</dbReference>
<dbReference type="PANTHER" id="PTHR43463:SF1">
    <property type="entry name" value="NICOTINATE-NUCLEOTIDE--DIMETHYLBENZIMIDAZOLE PHOSPHORIBOSYLTRANSFERASE"/>
    <property type="match status" value="1"/>
</dbReference>
<dbReference type="Pfam" id="PF02277">
    <property type="entry name" value="DBI_PRT"/>
    <property type="match status" value="1"/>
</dbReference>
<dbReference type="SUPFAM" id="SSF52733">
    <property type="entry name" value="Nicotinate mononucleotide:5,6-dimethylbenzimidazole phosphoribosyltransferase (CobT)"/>
    <property type="match status" value="1"/>
</dbReference>
<evidence type="ECO:0000255" key="1">
    <source>
        <dbReference type="HAMAP-Rule" id="MF_00230"/>
    </source>
</evidence>
<gene>
    <name evidence="1" type="primary">cobT</name>
    <name type="ordered locus">BMEA_A0905</name>
</gene>
<organism>
    <name type="scientific">Brucella melitensis biotype 2 (strain ATCC 23457)</name>
    <dbReference type="NCBI Taxonomy" id="546272"/>
    <lineage>
        <taxon>Bacteria</taxon>
        <taxon>Pseudomonadati</taxon>
        <taxon>Pseudomonadota</taxon>
        <taxon>Alphaproteobacteria</taxon>
        <taxon>Hyphomicrobiales</taxon>
        <taxon>Brucellaceae</taxon>
        <taxon>Brucella/Ochrobactrum group</taxon>
        <taxon>Brucella</taxon>
    </lineage>
</organism>
<comment type="function">
    <text evidence="1">Catalyzes the synthesis of alpha-ribazole-5'-phosphate from nicotinate mononucleotide (NAMN) and 5,6-dimethylbenzimidazole (DMB).</text>
</comment>
<comment type="catalytic activity">
    <reaction evidence="1">
        <text>5,6-dimethylbenzimidazole + nicotinate beta-D-ribonucleotide = alpha-ribazole 5'-phosphate + nicotinate + H(+)</text>
        <dbReference type="Rhea" id="RHEA:11196"/>
        <dbReference type="ChEBI" id="CHEBI:15378"/>
        <dbReference type="ChEBI" id="CHEBI:15890"/>
        <dbReference type="ChEBI" id="CHEBI:32544"/>
        <dbReference type="ChEBI" id="CHEBI:57502"/>
        <dbReference type="ChEBI" id="CHEBI:57918"/>
        <dbReference type="EC" id="2.4.2.21"/>
    </reaction>
</comment>
<comment type="pathway">
    <text evidence="1">Nucleoside biosynthesis; alpha-ribazole biosynthesis; alpha-ribazole from 5,6-dimethylbenzimidazole: step 1/2.</text>
</comment>
<comment type="similarity">
    <text evidence="1">Belongs to the CobT family.</text>
</comment>